<proteinExistence type="inferred from homology"/>
<keyword id="KW-0227">DNA damage</keyword>
<keyword id="KW-0233">DNA recombination</keyword>
<keyword id="KW-0234">DNA repair</keyword>
<keyword id="KW-0479">Metal-binding</keyword>
<keyword id="KW-0862">Zinc</keyword>
<keyword id="KW-0863">Zinc-finger</keyword>
<name>RECR_ECOLC</name>
<dbReference type="EMBL" id="CP000946">
    <property type="protein sequence ID" value="ACA78767.1"/>
    <property type="molecule type" value="Genomic_DNA"/>
</dbReference>
<dbReference type="RefSeq" id="WP_001195025.1">
    <property type="nucleotide sequence ID" value="NZ_MTFT01000020.1"/>
</dbReference>
<dbReference type="SMR" id="B1IZC2"/>
<dbReference type="GeneID" id="93776978"/>
<dbReference type="KEGG" id="ecl:EcolC_3144"/>
<dbReference type="HOGENOM" id="CLU_060739_1_2_6"/>
<dbReference type="GO" id="GO:0003677">
    <property type="term" value="F:DNA binding"/>
    <property type="evidence" value="ECO:0007669"/>
    <property type="project" value="UniProtKB-UniRule"/>
</dbReference>
<dbReference type="GO" id="GO:0008270">
    <property type="term" value="F:zinc ion binding"/>
    <property type="evidence" value="ECO:0007669"/>
    <property type="project" value="UniProtKB-KW"/>
</dbReference>
<dbReference type="GO" id="GO:0006310">
    <property type="term" value="P:DNA recombination"/>
    <property type="evidence" value="ECO:0007669"/>
    <property type="project" value="UniProtKB-UniRule"/>
</dbReference>
<dbReference type="GO" id="GO:0006281">
    <property type="term" value="P:DNA repair"/>
    <property type="evidence" value="ECO:0007669"/>
    <property type="project" value="UniProtKB-UniRule"/>
</dbReference>
<dbReference type="CDD" id="cd01025">
    <property type="entry name" value="TOPRIM_recR"/>
    <property type="match status" value="1"/>
</dbReference>
<dbReference type="FunFam" id="1.10.8.420:FF:000001">
    <property type="entry name" value="Recombination protein RecR"/>
    <property type="match status" value="1"/>
</dbReference>
<dbReference type="FunFam" id="3.40.1360.10:FF:000001">
    <property type="entry name" value="Recombination protein RecR"/>
    <property type="match status" value="1"/>
</dbReference>
<dbReference type="Gene3D" id="3.40.1360.10">
    <property type="match status" value="1"/>
</dbReference>
<dbReference type="Gene3D" id="6.10.250.240">
    <property type="match status" value="1"/>
</dbReference>
<dbReference type="Gene3D" id="1.10.8.420">
    <property type="entry name" value="RecR Domain 1"/>
    <property type="match status" value="1"/>
</dbReference>
<dbReference type="HAMAP" id="MF_00017">
    <property type="entry name" value="RecR"/>
    <property type="match status" value="1"/>
</dbReference>
<dbReference type="InterPro" id="IPR000093">
    <property type="entry name" value="DNA_Rcmb_RecR"/>
</dbReference>
<dbReference type="InterPro" id="IPR023627">
    <property type="entry name" value="Rcmb_RecR"/>
</dbReference>
<dbReference type="InterPro" id="IPR015967">
    <property type="entry name" value="Rcmb_RecR_Znf"/>
</dbReference>
<dbReference type="InterPro" id="IPR006171">
    <property type="entry name" value="TOPRIM_dom"/>
</dbReference>
<dbReference type="InterPro" id="IPR034137">
    <property type="entry name" value="TOPRIM_RecR"/>
</dbReference>
<dbReference type="NCBIfam" id="TIGR00615">
    <property type="entry name" value="recR"/>
    <property type="match status" value="1"/>
</dbReference>
<dbReference type="PANTHER" id="PTHR30446">
    <property type="entry name" value="RECOMBINATION PROTEIN RECR"/>
    <property type="match status" value="1"/>
</dbReference>
<dbReference type="PANTHER" id="PTHR30446:SF0">
    <property type="entry name" value="RECOMBINATION PROTEIN RECR"/>
    <property type="match status" value="1"/>
</dbReference>
<dbReference type="Pfam" id="PF21175">
    <property type="entry name" value="RecR_C"/>
    <property type="match status" value="1"/>
</dbReference>
<dbReference type="Pfam" id="PF21176">
    <property type="entry name" value="RecR_HhH"/>
    <property type="match status" value="1"/>
</dbReference>
<dbReference type="Pfam" id="PF02132">
    <property type="entry name" value="RecR_ZnF"/>
    <property type="match status" value="1"/>
</dbReference>
<dbReference type="Pfam" id="PF13662">
    <property type="entry name" value="Toprim_4"/>
    <property type="match status" value="1"/>
</dbReference>
<dbReference type="SMART" id="SM00493">
    <property type="entry name" value="TOPRIM"/>
    <property type="match status" value="1"/>
</dbReference>
<dbReference type="SUPFAM" id="SSF111304">
    <property type="entry name" value="Recombination protein RecR"/>
    <property type="match status" value="1"/>
</dbReference>
<dbReference type="PROSITE" id="PS01300">
    <property type="entry name" value="RECR"/>
    <property type="match status" value="1"/>
</dbReference>
<dbReference type="PROSITE" id="PS50880">
    <property type="entry name" value="TOPRIM"/>
    <property type="match status" value="1"/>
</dbReference>
<reference key="1">
    <citation type="submission" date="2008-02" db="EMBL/GenBank/DDBJ databases">
        <title>Complete sequence of Escherichia coli C str. ATCC 8739.</title>
        <authorList>
            <person name="Copeland A."/>
            <person name="Lucas S."/>
            <person name="Lapidus A."/>
            <person name="Glavina del Rio T."/>
            <person name="Dalin E."/>
            <person name="Tice H."/>
            <person name="Bruce D."/>
            <person name="Goodwin L."/>
            <person name="Pitluck S."/>
            <person name="Kiss H."/>
            <person name="Brettin T."/>
            <person name="Detter J.C."/>
            <person name="Han C."/>
            <person name="Kuske C.R."/>
            <person name="Schmutz J."/>
            <person name="Larimer F."/>
            <person name="Land M."/>
            <person name="Hauser L."/>
            <person name="Kyrpides N."/>
            <person name="Mikhailova N."/>
            <person name="Ingram L."/>
            <person name="Richardson P."/>
        </authorList>
    </citation>
    <scope>NUCLEOTIDE SEQUENCE [LARGE SCALE GENOMIC DNA]</scope>
    <source>
        <strain>ATCC 8739 / DSM 1576 / NBRC 3972 / NCIMB 8545 / WDCM 00012 / Crooks</strain>
    </source>
</reference>
<evidence type="ECO:0000255" key="1">
    <source>
        <dbReference type="HAMAP-Rule" id="MF_00017"/>
    </source>
</evidence>
<accession>B1IZC2</accession>
<comment type="function">
    <text evidence="1">May play a role in DNA repair. It seems to be involved in an RecBC-independent recombinational process of DNA repair. It may act with RecF and RecO.</text>
</comment>
<comment type="similarity">
    <text evidence="1">Belongs to the RecR family.</text>
</comment>
<protein>
    <recommendedName>
        <fullName evidence="1">Recombination protein RecR</fullName>
    </recommendedName>
</protein>
<sequence>MQTSPLLTQLMEALRCLPGVGPKSAQRMAFTLLQRDRSGGMRLAQALTRAMSEIGHCADCRTFTEQEVCNICSNPRRQENGQICVVESPADIYAIEQTGQFSGRYFVLMGHLSPLDGIGPDDIGLDRLEQRLAEEKITEVILATNPTVEGEATANYIAELCAQYDVEASRIAHGVPVGGELEMVDGTTLSHSLAGRHKIRF</sequence>
<gene>
    <name evidence="1" type="primary">recR</name>
    <name type="ordered locus">EcolC_3144</name>
</gene>
<feature type="chain" id="PRO_1000074119" description="Recombination protein RecR">
    <location>
        <begin position="1"/>
        <end position="201"/>
    </location>
</feature>
<feature type="domain" description="Toprim" evidence="1">
    <location>
        <begin position="81"/>
        <end position="176"/>
    </location>
</feature>
<feature type="zinc finger region" description="C4-type" evidence="1">
    <location>
        <begin position="57"/>
        <end position="72"/>
    </location>
</feature>
<organism>
    <name type="scientific">Escherichia coli (strain ATCC 8739 / DSM 1576 / NBRC 3972 / NCIMB 8545 / WDCM 00012 / Crooks)</name>
    <dbReference type="NCBI Taxonomy" id="481805"/>
    <lineage>
        <taxon>Bacteria</taxon>
        <taxon>Pseudomonadati</taxon>
        <taxon>Pseudomonadota</taxon>
        <taxon>Gammaproteobacteria</taxon>
        <taxon>Enterobacterales</taxon>
        <taxon>Enterobacteriaceae</taxon>
        <taxon>Escherichia</taxon>
    </lineage>
</organism>